<accession>B3EWQ0</accession>
<name>JURTX_AVIJU</name>
<feature type="peptide" id="PRO_0000419529" description="U-theraphotoxin-Aju1a" evidence="3">
    <location>
        <begin position="1"/>
        <end position="38"/>
    </location>
</feature>
<feature type="disulfide bond" evidence="3">
    <location>
        <begin position="3"/>
        <end position="24"/>
    </location>
</feature>
<feature type="disulfide bond" evidence="3">
    <location>
        <begin position="7"/>
        <end position="30"/>
    </location>
</feature>
<feature type="disulfide bond" evidence="3">
    <location>
        <begin position="16"/>
        <end position="35"/>
    </location>
</feature>
<proteinExistence type="evidence at protein level"/>
<comment type="function">
    <text evidence="1">Has strong antifungal activity against C.albicans MDM8, C.krusei IOC 4559 (MIC=2.5-5 uM), C.glabrata IOC 45658 (MIC=2.5-5 uM), C.albicans IOC 45588 (MIC=2.5-5 uM), C.parapsilosis IOC 456416 (MIC=2.5-5 uM), C.tropicalis IOC 45608 (MIC=2.5-5 uM), C.guilliermondii IOC 455716 (MIC=2.5-5 uM) and A.niger (MIC=5-10 uM). Lacks antifungal activity against B.bassiana. Has no antibacterial effect against Gram-positive bacteria M.luteus, S.epidermidis, S.aureus or against Gram-negative bacteria E.coli and P.aeruginosa. Has no hemolytic activity against human erythrocytes. Probable ion channel inhibitor (By similarity).</text>
</comment>
<comment type="subcellular location">
    <subcellularLocation>
        <location evidence="3">Secreted</location>
    </subcellularLocation>
</comment>
<comment type="tissue specificity">
    <text evidence="5">Expressed by the venom gland.</text>
</comment>
<comment type="domain">
    <text evidence="2">The presence of a 'disulfide through disulfide knot' structurally defines this protein as a knottin.</text>
</comment>
<comment type="mass spectrometry" mass="4005.83" method="MALDI" evidence="3"/>
<comment type="similarity">
    <text evidence="5">Belongs to the neurotoxin 12 (Hwtx-2) family. 03 (juruin) subfamily.</text>
</comment>
<sequence length="38" mass="4013">FTCAISCDIKVNGKPCKGSGEKKCSGGWSCKFNVCVKV</sequence>
<evidence type="ECO:0000250" key="1"/>
<evidence type="ECO:0000250" key="2">
    <source>
        <dbReference type="UniProtKB" id="D2Y2I3"/>
    </source>
</evidence>
<evidence type="ECO:0000269" key="3">
    <source>
    </source>
</evidence>
<evidence type="ECO:0000303" key="4">
    <source>
    </source>
</evidence>
<evidence type="ECO:0000305" key="5"/>
<protein>
    <recommendedName>
        <fullName>U-theraphotoxin-Aju1a</fullName>
        <shortName>U-TRTX-Aju1a</shortName>
    </recommendedName>
    <alternativeName>
        <fullName evidence="4">Juruin</fullName>
    </alternativeName>
</protein>
<dbReference type="SMR" id="B3EWQ0"/>
<dbReference type="GO" id="GO:0005576">
    <property type="term" value="C:extracellular region"/>
    <property type="evidence" value="ECO:0007669"/>
    <property type="project" value="UniProtKB-SubCell"/>
</dbReference>
<dbReference type="GO" id="GO:0099106">
    <property type="term" value="F:ion channel regulator activity"/>
    <property type="evidence" value="ECO:0007669"/>
    <property type="project" value="UniProtKB-KW"/>
</dbReference>
<dbReference type="GO" id="GO:0090729">
    <property type="term" value="F:toxin activity"/>
    <property type="evidence" value="ECO:0007669"/>
    <property type="project" value="UniProtKB-KW"/>
</dbReference>
<dbReference type="GO" id="GO:0050832">
    <property type="term" value="P:defense response to fungus"/>
    <property type="evidence" value="ECO:0007669"/>
    <property type="project" value="UniProtKB-KW"/>
</dbReference>
<dbReference type="GO" id="GO:0031640">
    <property type="term" value="P:killing of cells of another organism"/>
    <property type="evidence" value="ECO:0007669"/>
    <property type="project" value="UniProtKB-KW"/>
</dbReference>
<dbReference type="InterPro" id="IPR012625">
    <property type="entry name" value="Hwtx-2-like"/>
</dbReference>
<dbReference type="Pfam" id="PF08089">
    <property type="entry name" value="Toxin_20"/>
    <property type="match status" value="1"/>
</dbReference>
<dbReference type="SUPFAM" id="SSF57059">
    <property type="entry name" value="omega toxin-like"/>
    <property type="match status" value="1"/>
</dbReference>
<dbReference type="PROSITE" id="PS60022">
    <property type="entry name" value="HWTX_2"/>
    <property type="match status" value="1"/>
</dbReference>
<reference key="1">
    <citation type="journal article" date="2012" name="Front. Microbiol.">
        <title>Juruin: an antifungal juruentoxin peptide from the venom of the amazonian pink toe spider, Avicularia juruensis, which contains the inhibitory cystine knot motif.</title>
        <authorList>
            <person name="Ayroza G."/>
            <person name="Ferreira I.L.C."/>
            <person name="Sayegh R.S.R."/>
            <person name="Tashima A.K."/>
            <person name="Silva jr P.I."/>
        </authorList>
    </citation>
    <scope>PROTEIN SEQUENCE</scope>
    <scope>FUNCTION</scope>
    <scope>DISULFIDE BOND</scope>
    <scope>MASS SPECTROMETRY</scope>
    <source>
        <tissue>Venom</tissue>
    </source>
</reference>
<keyword id="KW-0929">Antimicrobial</keyword>
<keyword id="KW-0903">Direct protein sequencing</keyword>
<keyword id="KW-1015">Disulfide bond</keyword>
<keyword id="KW-0295">Fungicide</keyword>
<keyword id="KW-0872">Ion channel impairing toxin</keyword>
<keyword id="KW-0960">Knottin</keyword>
<keyword id="KW-0964">Secreted</keyword>
<keyword id="KW-0800">Toxin</keyword>
<organism>
    <name type="scientific">Avicularia juruensis</name>
    <name type="common">Yellow-banded pinktoe</name>
    <dbReference type="NCBI Taxonomy" id="548547"/>
    <lineage>
        <taxon>Eukaryota</taxon>
        <taxon>Metazoa</taxon>
        <taxon>Ecdysozoa</taxon>
        <taxon>Arthropoda</taxon>
        <taxon>Chelicerata</taxon>
        <taxon>Arachnida</taxon>
        <taxon>Araneae</taxon>
        <taxon>Mygalomorphae</taxon>
        <taxon>Theraphosidae</taxon>
        <taxon>Avicularia</taxon>
    </lineage>
</organism>